<comment type="function">
    <text evidence="1">Transfers and isomerizes the ribose moiety from AdoMet to the 7-aminomethyl group of 7-deazaguanine (preQ1-tRNA) to give epoxyqueuosine (oQ-tRNA).</text>
</comment>
<comment type="catalytic activity">
    <reaction evidence="1">
        <text>7-aminomethyl-7-carbaguanosine(34) in tRNA + S-adenosyl-L-methionine = epoxyqueuosine(34) in tRNA + adenine + L-methionine + 2 H(+)</text>
        <dbReference type="Rhea" id="RHEA:32155"/>
        <dbReference type="Rhea" id="RHEA-COMP:10342"/>
        <dbReference type="Rhea" id="RHEA-COMP:18582"/>
        <dbReference type="ChEBI" id="CHEBI:15378"/>
        <dbReference type="ChEBI" id="CHEBI:16708"/>
        <dbReference type="ChEBI" id="CHEBI:57844"/>
        <dbReference type="ChEBI" id="CHEBI:59789"/>
        <dbReference type="ChEBI" id="CHEBI:82833"/>
        <dbReference type="ChEBI" id="CHEBI:194443"/>
        <dbReference type="EC" id="2.4.99.17"/>
    </reaction>
</comment>
<comment type="pathway">
    <text evidence="1">tRNA modification; tRNA-queuosine biosynthesis.</text>
</comment>
<comment type="subunit">
    <text evidence="1">Monomer.</text>
</comment>
<comment type="subcellular location">
    <subcellularLocation>
        <location evidence="1">Cytoplasm</location>
    </subcellularLocation>
</comment>
<comment type="similarity">
    <text evidence="1">Belongs to the QueA family.</text>
</comment>
<sequence>MQLSDFSFDLPKSLISFHPYFIRSTCRLMVMYGHTGMIFHKRFFNIIDEINSGDLIILNNTQVIPARFFGKKESGGKVEVLVEKILGINNILASIKNSKNINIGSKIFFGYKDKIKGSVVDCKNSFFEIFFHDNIDSAIDIINNIGEIPLPPYIKRFRNKLDVDLYQTVYKKKTGSIAAPTAGLHFDLPLLEALHNKGVDIDYITLHIGSGTFQPIRRVQIEEHIMHSESVEVSSSVIQKIKSCKKKGGRIIAVGTSTLRALESAYHSSEWSDSKDFISDTNIFIYPGYKHNIVDALITNFHFPESTLIMLVCSFLGYKNTMNAYNTAIVNKYSFFSYGDAMYITHNKLAPYENFII</sequence>
<organism>
    <name type="scientific">Buchnera aphidicola subsp. Acyrthosiphon pisum (strain Tuc7)</name>
    <dbReference type="NCBI Taxonomy" id="561501"/>
    <lineage>
        <taxon>Bacteria</taxon>
        <taxon>Pseudomonadati</taxon>
        <taxon>Pseudomonadota</taxon>
        <taxon>Gammaproteobacteria</taxon>
        <taxon>Enterobacterales</taxon>
        <taxon>Erwiniaceae</taxon>
        <taxon>Buchnera</taxon>
    </lineage>
</organism>
<proteinExistence type="inferred from homology"/>
<feature type="chain" id="PRO_1000119146" description="S-adenosylmethionine:tRNA ribosyltransferase-isomerase">
    <location>
        <begin position="1"/>
        <end position="357"/>
    </location>
</feature>
<reference key="1">
    <citation type="journal article" date="2009" name="Science">
        <title>The dynamics and time scale of ongoing genomic erosion in symbiotic bacteria.</title>
        <authorList>
            <person name="Moran N.A."/>
            <person name="McLaughlin H.J."/>
            <person name="Sorek R."/>
        </authorList>
    </citation>
    <scope>NUCLEOTIDE SEQUENCE [LARGE SCALE GENOMIC DNA]</scope>
    <source>
        <strain>Tuc7</strain>
    </source>
</reference>
<evidence type="ECO:0000255" key="1">
    <source>
        <dbReference type="HAMAP-Rule" id="MF_00113"/>
    </source>
</evidence>
<accession>B8D737</accession>
<dbReference type="EC" id="2.4.99.17" evidence="1"/>
<dbReference type="EMBL" id="CP001158">
    <property type="protein sequence ID" value="ACL29952.1"/>
    <property type="molecule type" value="Genomic_DNA"/>
</dbReference>
<dbReference type="RefSeq" id="WP_012619442.1">
    <property type="nucleotide sequence ID" value="NC_011834.1"/>
</dbReference>
<dbReference type="SMR" id="B8D737"/>
<dbReference type="KEGG" id="bau:BUAPTUC7_131"/>
<dbReference type="HOGENOM" id="CLU_039110_1_0_6"/>
<dbReference type="UniPathway" id="UPA00392"/>
<dbReference type="GO" id="GO:0005737">
    <property type="term" value="C:cytoplasm"/>
    <property type="evidence" value="ECO:0007669"/>
    <property type="project" value="UniProtKB-SubCell"/>
</dbReference>
<dbReference type="GO" id="GO:0051075">
    <property type="term" value="F:S-adenosylmethionine:tRNA ribosyltransferase-isomerase activity"/>
    <property type="evidence" value="ECO:0007669"/>
    <property type="project" value="UniProtKB-EC"/>
</dbReference>
<dbReference type="GO" id="GO:0008616">
    <property type="term" value="P:queuosine biosynthetic process"/>
    <property type="evidence" value="ECO:0007669"/>
    <property type="project" value="UniProtKB-UniRule"/>
</dbReference>
<dbReference type="GO" id="GO:0002099">
    <property type="term" value="P:tRNA wobble guanine modification"/>
    <property type="evidence" value="ECO:0007669"/>
    <property type="project" value="TreeGrafter"/>
</dbReference>
<dbReference type="FunFam" id="3.40.1780.10:FF:000001">
    <property type="entry name" value="S-adenosylmethionine:tRNA ribosyltransferase-isomerase"/>
    <property type="match status" value="1"/>
</dbReference>
<dbReference type="Gene3D" id="2.40.10.240">
    <property type="entry name" value="QueA-like"/>
    <property type="match status" value="1"/>
</dbReference>
<dbReference type="Gene3D" id="3.40.1780.10">
    <property type="entry name" value="QueA-like"/>
    <property type="match status" value="1"/>
</dbReference>
<dbReference type="HAMAP" id="MF_00113">
    <property type="entry name" value="QueA"/>
    <property type="match status" value="1"/>
</dbReference>
<dbReference type="InterPro" id="IPR003699">
    <property type="entry name" value="QueA"/>
</dbReference>
<dbReference type="InterPro" id="IPR042118">
    <property type="entry name" value="QueA_dom1"/>
</dbReference>
<dbReference type="InterPro" id="IPR042119">
    <property type="entry name" value="QueA_dom2"/>
</dbReference>
<dbReference type="InterPro" id="IPR036100">
    <property type="entry name" value="QueA_sf"/>
</dbReference>
<dbReference type="NCBIfam" id="NF001140">
    <property type="entry name" value="PRK00147.1"/>
    <property type="match status" value="1"/>
</dbReference>
<dbReference type="NCBIfam" id="TIGR00113">
    <property type="entry name" value="queA"/>
    <property type="match status" value="1"/>
</dbReference>
<dbReference type="PANTHER" id="PTHR30307">
    <property type="entry name" value="S-ADENOSYLMETHIONINE:TRNA RIBOSYLTRANSFERASE-ISOMERASE"/>
    <property type="match status" value="1"/>
</dbReference>
<dbReference type="PANTHER" id="PTHR30307:SF0">
    <property type="entry name" value="S-ADENOSYLMETHIONINE:TRNA RIBOSYLTRANSFERASE-ISOMERASE"/>
    <property type="match status" value="1"/>
</dbReference>
<dbReference type="Pfam" id="PF02547">
    <property type="entry name" value="Queuosine_synth"/>
    <property type="match status" value="1"/>
</dbReference>
<dbReference type="SUPFAM" id="SSF111337">
    <property type="entry name" value="QueA-like"/>
    <property type="match status" value="1"/>
</dbReference>
<keyword id="KW-0963">Cytoplasm</keyword>
<keyword id="KW-0671">Queuosine biosynthesis</keyword>
<keyword id="KW-0949">S-adenosyl-L-methionine</keyword>
<keyword id="KW-0808">Transferase</keyword>
<protein>
    <recommendedName>
        <fullName evidence="1">S-adenosylmethionine:tRNA ribosyltransferase-isomerase</fullName>
        <ecNumber evidence="1">2.4.99.17</ecNumber>
    </recommendedName>
    <alternativeName>
        <fullName evidence="1">Queuosine biosynthesis protein QueA</fullName>
    </alternativeName>
</protein>
<name>QUEA_BUCAT</name>
<gene>
    <name evidence="1" type="primary">queA</name>
    <name type="ordered locus">BUAPTUC7_131</name>
</gene>